<keyword id="KW-0414">Isoprene biosynthesis</keyword>
<keyword id="KW-0464">Manganese</keyword>
<keyword id="KW-0479">Metal-binding</keyword>
<keyword id="KW-0521">NADP</keyword>
<keyword id="KW-0560">Oxidoreductase</keyword>
<proteinExistence type="inferred from homology"/>
<organism>
    <name type="scientific">Bacillus pumilus (strain SAFR-032)</name>
    <dbReference type="NCBI Taxonomy" id="315750"/>
    <lineage>
        <taxon>Bacteria</taxon>
        <taxon>Bacillati</taxon>
        <taxon>Bacillota</taxon>
        <taxon>Bacilli</taxon>
        <taxon>Bacillales</taxon>
        <taxon>Bacillaceae</taxon>
        <taxon>Bacillus</taxon>
    </lineage>
</organism>
<evidence type="ECO:0000255" key="1">
    <source>
        <dbReference type="HAMAP-Rule" id="MF_00183"/>
    </source>
</evidence>
<reference key="1">
    <citation type="journal article" date="2007" name="PLoS ONE">
        <title>Paradoxical DNA repair and peroxide resistance gene conservation in Bacillus pumilus SAFR-032.</title>
        <authorList>
            <person name="Gioia J."/>
            <person name="Yerrapragada S."/>
            <person name="Qin X."/>
            <person name="Jiang H."/>
            <person name="Igboeli O.C."/>
            <person name="Muzny D."/>
            <person name="Dugan-Rocha S."/>
            <person name="Ding Y."/>
            <person name="Hawes A."/>
            <person name="Liu W."/>
            <person name="Perez L."/>
            <person name="Kovar C."/>
            <person name="Dinh H."/>
            <person name="Lee S."/>
            <person name="Nazareth L."/>
            <person name="Blyth P."/>
            <person name="Holder M."/>
            <person name="Buhay C."/>
            <person name="Tirumalai M.R."/>
            <person name="Liu Y."/>
            <person name="Dasgupta I."/>
            <person name="Bokhetache L."/>
            <person name="Fujita M."/>
            <person name="Karouia F."/>
            <person name="Eswara Moorthy P."/>
            <person name="Siefert J."/>
            <person name="Uzman A."/>
            <person name="Buzumbo P."/>
            <person name="Verma A."/>
            <person name="Zwiya H."/>
            <person name="McWilliams B.D."/>
            <person name="Olowu A."/>
            <person name="Clinkenbeard K.D."/>
            <person name="Newcombe D."/>
            <person name="Golebiewski L."/>
            <person name="Petrosino J.F."/>
            <person name="Nicholson W.L."/>
            <person name="Fox G.E."/>
            <person name="Venkateswaran K."/>
            <person name="Highlander S.K."/>
            <person name="Weinstock G.M."/>
        </authorList>
    </citation>
    <scope>NUCLEOTIDE SEQUENCE [LARGE SCALE GENOMIC DNA]</scope>
    <source>
        <strain>SAFR-032</strain>
    </source>
</reference>
<comment type="function">
    <text evidence="1">Catalyzes the NADPH-dependent rearrangement and reduction of 1-deoxy-D-xylulose-5-phosphate (DXP) to 2-C-methyl-D-erythritol 4-phosphate (MEP).</text>
</comment>
<comment type="catalytic activity">
    <reaction evidence="1">
        <text>2-C-methyl-D-erythritol 4-phosphate + NADP(+) = 1-deoxy-D-xylulose 5-phosphate + NADPH + H(+)</text>
        <dbReference type="Rhea" id="RHEA:13717"/>
        <dbReference type="ChEBI" id="CHEBI:15378"/>
        <dbReference type="ChEBI" id="CHEBI:57783"/>
        <dbReference type="ChEBI" id="CHEBI:57792"/>
        <dbReference type="ChEBI" id="CHEBI:58262"/>
        <dbReference type="ChEBI" id="CHEBI:58349"/>
        <dbReference type="EC" id="1.1.1.267"/>
    </reaction>
    <physiologicalReaction direction="right-to-left" evidence="1">
        <dbReference type="Rhea" id="RHEA:13719"/>
    </physiologicalReaction>
</comment>
<comment type="cofactor">
    <cofactor evidence="1">
        <name>Mg(2+)</name>
        <dbReference type="ChEBI" id="CHEBI:18420"/>
    </cofactor>
    <cofactor evidence="1">
        <name>Mn(2+)</name>
        <dbReference type="ChEBI" id="CHEBI:29035"/>
    </cofactor>
</comment>
<comment type="pathway">
    <text evidence="1">Isoprenoid biosynthesis; isopentenyl diphosphate biosynthesis via DXP pathway; isopentenyl diphosphate from 1-deoxy-D-xylulose 5-phosphate: step 1/6.</text>
</comment>
<comment type="similarity">
    <text evidence="1">Belongs to the DXR family.</text>
</comment>
<gene>
    <name evidence="1" type="primary">dxr</name>
    <name type="ordered locus">BPUM_1554</name>
</gene>
<accession>A8FDB9</accession>
<protein>
    <recommendedName>
        <fullName evidence="1">1-deoxy-D-xylulose 5-phosphate reductoisomerase</fullName>
        <shortName evidence="1">DXP reductoisomerase</shortName>
        <ecNumber evidence="1">1.1.1.267</ecNumber>
    </recommendedName>
    <alternativeName>
        <fullName evidence="1">1-deoxyxylulose-5-phosphate reductoisomerase</fullName>
    </alternativeName>
    <alternativeName>
        <fullName evidence="1">2-C-methyl-D-erythritol 4-phosphate synthase</fullName>
    </alternativeName>
</protein>
<dbReference type="EC" id="1.1.1.267" evidence="1"/>
<dbReference type="EMBL" id="CP000813">
    <property type="protein sequence ID" value="ABV62236.1"/>
    <property type="molecule type" value="Genomic_DNA"/>
</dbReference>
<dbReference type="RefSeq" id="WP_012009983.1">
    <property type="nucleotide sequence ID" value="NZ_VEIS01000003.1"/>
</dbReference>
<dbReference type="SMR" id="A8FDB9"/>
<dbReference type="STRING" id="315750.BPUM_1554"/>
<dbReference type="GeneID" id="5620817"/>
<dbReference type="KEGG" id="bpu:BPUM_1554"/>
<dbReference type="eggNOG" id="COG0743">
    <property type="taxonomic scope" value="Bacteria"/>
</dbReference>
<dbReference type="HOGENOM" id="CLU_035714_4_0_9"/>
<dbReference type="OrthoDB" id="9806546at2"/>
<dbReference type="UniPathway" id="UPA00056">
    <property type="reaction ID" value="UER00092"/>
</dbReference>
<dbReference type="Proteomes" id="UP000001355">
    <property type="component" value="Chromosome"/>
</dbReference>
<dbReference type="GO" id="GO:0030604">
    <property type="term" value="F:1-deoxy-D-xylulose-5-phosphate reductoisomerase activity"/>
    <property type="evidence" value="ECO:0007669"/>
    <property type="project" value="UniProtKB-UniRule"/>
</dbReference>
<dbReference type="GO" id="GO:0030145">
    <property type="term" value="F:manganese ion binding"/>
    <property type="evidence" value="ECO:0007669"/>
    <property type="project" value="TreeGrafter"/>
</dbReference>
<dbReference type="GO" id="GO:0070402">
    <property type="term" value="F:NADPH binding"/>
    <property type="evidence" value="ECO:0007669"/>
    <property type="project" value="InterPro"/>
</dbReference>
<dbReference type="GO" id="GO:0051484">
    <property type="term" value="P:isopentenyl diphosphate biosynthetic process, methylerythritol 4-phosphate pathway involved in terpenoid biosynthetic process"/>
    <property type="evidence" value="ECO:0007669"/>
    <property type="project" value="TreeGrafter"/>
</dbReference>
<dbReference type="FunFam" id="3.40.50.720:FF:000045">
    <property type="entry name" value="1-deoxy-D-xylulose 5-phosphate reductoisomerase"/>
    <property type="match status" value="1"/>
</dbReference>
<dbReference type="Gene3D" id="1.10.1740.10">
    <property type="match status" value="1"/>
</dbReference>
<dbReference type="Gene3D" id="3.40.50.720">
    <property type="entry name" value="NAD(P)-binding Rossmann-like Domain"/>
    <property type="match status" value="1"/>
</dbReference>
<dbReference type="HAMAP" id="MF_00183">
    <property type="entry name" value="DXP_reductoisom"/>
    <property type="match status" value="1"/>
</dbReference>
<dbReference type="InterPro" id="IPR003821">
    <property type="entry name" value="DXP_reductoisomerase"/>
</dbReference>
<dbReference type="InterPro" id="IPR013644">
    <property type="entry name" value="DXP_reductoisomerase_C"/>
</dbReference>
<dbReference type="InterPro" id="IPR013512">
    <property type="entry name" value="DXP_reductoisomerase_N"/>
</dbReference>
<dbReference type="InterPro" id="IPR026877">
    <property type="entry name" value="DXPR_C"/>
</dbReference>
<dbReference type="InterPro" id="IPR036169">
    <property type="entry name" value="DXPR_C_sf"/>
</dbReference>
<dbReference type="InterPro" id="IPR036291">
    <property type="entry name" value="NAD(P)-bd_dom_sf"/>
</dbReference>
<dbReference type="NCBIfam" id="TIGR00243">
    <property type="entry name" value="Dxr"/>
    <property type="match status" value="1"/>
</dbReference>
<dbReference type="NCBIfam" id="NF009114">
    <property type="entry name" value="PRK12464.1"/>
    <property type="match status" value="1"/>
</dbReference>
<dbReference type="PANTHER" id="PTHR30525">
    <property type="entry name" value="1-DEOXY-D-XYLULOSE 5-PHOSPHATE REDUCTOISOMERASE"/>
    <property type="match status" value="1"/>
</dbReference>
<dbReference type="PANTHER" id="PTHR30525:SF0">
    <property type="entry name" value="1-DEOXY-D-XYLULOSE 5-PHOSPHATE REDUCTOISOMERASE, CHLOROPLASTIC"/>
    <property type="match status" value="1"/>
</dbReference>
<dbReference type="Pfam" id="PF08436">
    <property type="entry name" value="DXP_redisom_C"/>
    <property type="match status" value="1"/>
</dbReference>
<dbReference type="Pfam" id="PF02670">
    <property type="entry name" value="DXP_reductoisom"/>
    <property type="match status" value="1"/>
</dbReference>
<dbReference type="Pfam" id="PF13288">
    <property type="entry name" value="DXPR_C"/>
    <property type="match status" value="1"/>
</dbReference>
<dbReference type="PIRSF" id="PIRSF006205">
    <property type="entry name" value="Dxp_reductismrs"/>
    <property type="match status" value="1"/>
</dbReference>
<dbReference type="SUPFAM" id="SSF69055">
    <property type="entry name" value="1-deoxy-D-xylulose-5-phosphate reductoisomerase, C-terminal domain"/>
    <property type="match status" value="1"/>
</dbReference>
<dbReference type="SUPFAM" id="SSF55347">
    <property type="entry name" value="Glyceraldehyde-3-phosphate dehydrogenase-like, C-terminal domain"/>
    <property type="match status" value="1"/>
</dbReference>
<dbReference type="SUPFAM" id="SSF51735">
    <property type="entry name" value="NAD(P)-binding Rossmann-fold domains"/>
    <property type="match status" value="1"/>
</dbReference>
<feature type="chain" id="PRO_1000058412" description="1-deoxy-D-xylulose 5-phosphate reductoisomerase">
    <location>
        <begin position="1"/>
        <end position="383"/>
    </location>
</feature>
<feature type="binding site" evidence="1">
    <location>
        <position position="10"/>
    </location>
    <ligand>
        <name>NADPH</name>
        <dbReference type="ChEBI" id="CHEBI:57783"/>
    </ligand>
</feature>
<feature type="binding site" evidence="1">
    <location>
        <position position="11"/>
    </location>
    <ligand>
        <name>NADPH</name>
        <dbReference type="ChEBI" id="CHEBI:57783"/>
    </ligand>
</feature>
<feature type="binding site" evidence="1">
    <location>
        <position position="12"/>
    </location>
    <ligand>
        <name>NADPH</name>
        <dbReference type="ChEBI" id="CHEBI:57783"/>
    </ligand>
</feature>
<feature type="binding site" evidence="1">
    <location>
        <position position="13"/>
    </location>
    <ligand>
        <name>NADPH</name>
        <dbReference type="ChEBI" id="CHEBI:57783"/>
    </ligand>
</feature>
<feature type="binding site" evidence="1">
    <location>
        <position position="36"/>
    </location>
    <ligand>
        <name>NADPH</name>
        <dbReference type="ChEBI" id="CHEBI:57783"/>
    </ligand>
</feature>
<feature type="binding site" evidence="1">
    <location>
        <position position="37"/>
    </location>
    <ligand>
        <name>NADPH</name>
        <dbReference type="ChEBI" id="CHEBI:57783"/>
    </ligand>
</feature>
<feature type="binding site" evidence="1">
    <location>
        <position position="38"/>
    </location>
    <ligand>
        <name>NADPH</name>
        <dbReference type="ChEBI" id="CHEBI:57783"/>
    </ligand>
</feature>
<feature type="binding site" evidence="1">
    <location>
        <position position="122"/>
    </location>
    <ligand>
        <name>NADPH</name>
        <dbReference type="ChEBI" id="CHEBI:57783"/>
    </ligand>
</feature>
<feature type="binding site" evidence="1">
    <location>
        <position position="123"/>
    </location>
    <ligand>
        <name>1-deoxy-D-xylulose 5-phosphate</name>
        <dbReference type="ChEBI" id="CHEBI:57792"/>
    </ligand>
</feature>
<feature type="binding site" evidence="1">
    <location>
        <position position="124"/>
    </location>
    <ligand>
        <name>NADPH</name>
        <dbReference type="ChEBI" id="CHEBI:57783"/>
    </ligand>
</feature>
<feature type="binding site" evidence="1">
    <location>
        <position position="148"/>
    </location>
    <ligand>
        <name>Mn(2+)</name>
        <dbReference type="ChEBI" id="CHEBI:29035"/>
    </ligand>
</feature>
<feature type="binding site" evidence="1">
    <location>
        <position position="149"/>
    </location>
    <ligand>
        <name>1-deoxy-D-xylulose 5-phosphate</name>
        <dbReference type="ChEBI" id="CHEBI:57792"/>
    </ligand>
</feature>
<feature type="binding site" evidence="1">
    <location>
        <position position="150"/>
    </location>
    <ligand>
        <name>1-deoxy-D-xylulose 5-phosphate</name>
        <dbReference type="ChEBI" id="CHEBI:57792"/>
    </ligand>
</feature>
<feature type="binding site" evidence="1">
    <location>
        <position position="150"/>
    </location>
    <ligand>
        <name>Mn(2+)</name>
        <dbReference type="ChEBI" id="CHEBI:29035"/>
    </ligand>
</feature>
<feature type="binding site" evidence="1">
    <location>
        <position position="174"/>
    </location>
    <ligand>
        <name>1-deoxy-D-xylulose 5-phosphate</name>
        <dbReference type="ChEBI" id="CHEBI:57792"/>
    </ligand>
</feature>
<feature type="binding site" evidence="1">
    <location>
        <position position="197"/>
    </location>
    <ligand>
        <name>1-deoxy-D-xylulose 5-phosphate</name>
        <dbReference type="ChEBI" id="CHEBI:57792"/>
    </ligand>
</feature>
<feature type="binding site" evidence="1">
    <location>
        <position position="203"/>
    </location>
    <ligand>
        <name>NADPH</name>
        <dbReference type="ChEBI" id="CHEBI:57783"/>
    </ligand>
</feature>
<feature type="binding site" evidence="1">
    <location>
        <position position="210"/>
    </location>
    <ligand>
        <name>1-deoxy-D-xylulose 5-phosphate</name>
        <dbReference type="ChEBI" id="CHEBI:57792"/>
    </ligand>
</feature>
<feature type="binding site" evidence="1">
    <location>
        <position position="215"/>
    </location>
    <ligand>
        <name>1-deoxy-D-xylulose 5-phosphate</name>
        <dbReference type="ChEBI" id="CHEBI:57792"/>
    </ligand>
</feature>
<feature type="binding site" evidence="1">
    <location>
        <position position="216"/>
    </location>
    <ligand>
        <name>1-deoxy-D-xylulose 5-phosphate</name>
        <dbReference type="ChEBI" id="CHEBI:57792"/>
    </ligand>
</feature>
<feature type="binding site" evidence="1">
    <location>
        <position position="219"/>
    </location>
    <ligand>
        <name>1-deoxy-D-xylulose 5-phosphate</name>
        <dbReference type="ChEBI" id="CHEBI:57792"/>
    </ligand>
</feature>
<feature type="binding site" evidence="1">
    <location>
        <position position="219"/>
    </location>
    <ligand>
        <name>Mn(2+)</name>
        <dbReference type="ChEBI" id="CHEBI:29035"/>
    </ligand>
</feature>
<sequence>MRYISLLGATGSIGEQTLDVIRQHPDKFKLKAMTFGRNVDKAIPIIEQFQPEFVGCLSEEAYHTLKGHSFEYDVKMAAGDEANIEAAIYDAVDVVVNALVGSVGLVPTLKAIEQKKTIALANKETLVTAGHIVKEYAKTYDVPLLPVDSEHSAIFQCLQGEQAKNIERLIVTASGGSFRDKKRTELEGVTVEEALNHPNWSMGAKITIDSATMMNKGLEVIEAHWLFDIPYEQIDVLLHKESIIHSMVEFHDKSVMAQLGTPDMRVPIQYALTYPDRAPLPEAKSLNLWEIGQLNFQKADFDRYRCLHFAYESGKIGGTMPAVLNAANEMAVDAFLKGKVTFLQIEELIEKALNRHHVISTPSLQDIHEVDKETRDFVQSILT</sequence>
<name>DXR_BACP2</name>